<name>ETS3_DROME</name>
<proteinExistence type="evidence at transcript level"/>
<organism>
    <name type="scientific">Drosophila melanogaster</name>
    <name type="common">Fruit fly</name>
    <dbReference type="NCBI Taxonomy" id="7227"/>
    <lineage>
        <taxon>Eukaryota</taxon>
        <taxon>Metazoa</taxon>
        <taxon>Ecdysozoa</taxon>
        <taxon>Arthropoda</taxon>
        <taxon>Hexapoda</taxon>
        <taxon>Insecta</taxon>
        <taxon>Pterygota</taxon>
        <taxon>Neoptera</taxon>
        <taxon>Endopterygota</taxon>
        <taxon>Diptera</taxon>
        <taxon>Brachycera</taxon>
        <taxon>Muscomorpha</taxon>
        <taxon>Ephydroidea</taxon>
        <taxon>Drosophilidae</taxon>
        <taxon>Drosophila</taxon>
        <taxon>Sophophora</taxon>
    </lineage>
</organism>
<protein>
    <recommendedName>
        <fullName>DNA-binding protein D-ETS-3</fullName>
    </recommendedName>
</protein>
<accession>P29774</accession>
<accession>Q86P68</accession>
<accession>Q95T62</accession>
<accession>Q95TB2</accession>
<accession>Q9VRU3</accession>
<accession>Q9VRU4</accession>
<accession>Q9VRU5</accession>
<feature type="chain" id="PRO_0000204107" description="DNA-binding protein D-ETS-3">
    <location>
        <begin position="1"/>
        <end position="490"/>
    </location>
</feature>
<feature type="DNA-binding region" description="ETS" evidence="1">
    <location>
        <begin position="317"/>
        <end position="397"/>
    </location>
</feature>
<feature type="region of interest" description="Disordered" evidence="2">
    <location>
        <begin position="190"/>
        <end position="255"/>
    </location>
</feature>
<feature type="region of interest" description="Disordered" evidence="2">
    <location>
        <begin position="271"/>
        <end position="294"/>
    </location>
</feature>
<feature type="compositionally biased region" description="Basic and acidic residues" evidence="2">
    <location>
        <begin position="196"/>
        <end position="207"/>
    </location>
</feature>
<feature type="compositionally biased region" description="Low complexity" evidence="2">
    <location>
        <begin position="211"/>
        <end position="227"/>
    </location>
</feature>
<feature type="compositionally biased region" description="Gly residues" evidence="2">
    <location>
        <begin position="244"/>
        <end position="255"/>
    </location>
</feature>
<feature type="compositionally biased region" description="Low complexity" evidence="2">
    <location>
        <begin position="271"/>
        <end position="280"/>
    </location>
</feature>
<feature type="splice variant" id="VSP_001470" description="In isoform B." evidence="4">
    <location>
        <begin position="1"/>
        <end position="233"/>
    </location>
</feature>
<feature type="splice variant" id="VSP_001471" description="In isoform B." evidence="4">
    <original>ISGSKSSNTSGTGGGASASGGGGSALY</original>
    <variation>MLDIKSSADYLSRSTGSFSNFSMLFAD</variation>
    <location>
        <begin position="234"/>
        <end position="260"/>
    </location>
</feature>
<gene>
    <name type="primary">Ets65A</name>
    <name type="synonym">ETS3</name>
    <name type="ORF">CG7018</name>
</gene>
<keyword id="KW-0025">Alternative splicing</keyword>
<keyword id="KW-0238">DNA-binding</keyword>
<keyword id="KW-0539">Nucleus</keyword>
<keyword id="KW-1185">Reference proteome</keyword>
<dbReference type="EMBL" id="AE014296">
    <property type="protein sequence ID" value="AAF50697.2"/>
    <property type="molecule type" value="Genomic_DNA"/>
</dbReference>
<dbReference type="EMBL" id="AE014296">
    <property type="protein sequence ID" value="AAF50696.2"/>
    <property type="molecule type" value="Genomic_DNA"/>
</dbReference>
<dbReference type="EMBL" id="AY060316">
    <property type="protein sequence ID" value="AAL25355.1"/>
    <property type="molecule type" value="mRNA"/>
</dbReference>
<dbReference type="EMBL" id="AY060250">
    <property type="protein sequence ID" value="AAR88562.1"/>
    <property type="molecule type" value="mRNA"/>
</dbReference>
<dbReference type="EMBL" id="BT003453">
    <property type="protein sequence ID" value="AAO39456.1"/>
    <property type="molecule type" value="mRNA"/>
</dbReference>
<dbReference type="EMBL" id="M88473">
    <property type="protein sequence ID" value="AAA28450.2"/>
    <property type="molecule type" value="Genomic_DNA"/>
</dbReference>
<dbReference type="PIR" id="S28820">
    <property type="entry name" value="S28820"/>
</dbReference>
<dbReference type="RefSeq" id="NP_523945.2">
    <molecule id="P29774-2"/>
    <property type="nucleotide sequence ID" value="NM_079221.3"/>
</dbReference>
<dbReference type="RefSeq" id="NP_729142.1">
    <molecule id="P29774-1"/>
    <property type="nucleotide sequence ID" value="NM_168156.2"/>
</dbReference>
<dbReference type="SMR" id="P29774"/>
<dbReference type="BioGRID" id="64155">
    <property type="interactions" value="71"/>
</dbReference>
<dbReference type="FunCoup" id="P29774">
    <property type="interactions" value="48"/>
</dbReference>
<dbReference type="IntAct" id="P29774">
    <property type="interactions" value="71"/>
</dbReference>
<dbReference type="STRING" id="7227.FBpp0312433"/>
<dbReference type="GlyGen" id="P29774">
    <property type="glycosylation" value="1 site"/>
</dbReference>
<dbReference type="PaxDb" id="7227-FBpp0076762"/>
<dbReference type="DNASU" id="38700"/>
<dbReference type="EnsemblMetazoa" id="FBtr0077054">
    <molecule id="P29774-1"/>
    <property type="protein sequence ID" value="FBpp0076762"/>
    <property type="gene ID" value="FBgn0005658"/>
</dbReference>
<dbReference type="EnsemblMetazoa" id="FBtr0077055">
    <molecule id="P29774-2"/>
    <property type="protein sequence ID" value="FBpp0076763"/>
    <property type="gene ID" value="FBgn0005658"/>
</dbReference>
<dbReference type="GeneID" id="38700"/>
<dbReference type="KEGG" id="dme:Dmel_CG7018"/>
<dbReference type="AGR" id="FB:FBgn0005658"/>
<dbReference type="CTD" id="38700"/>
<dbReference type="FlyBase" id="FBgn0005658">
    <property type="gene designation" value="Ets65A"/>
</dbReference>
<dbReference type="VEuPathDB" id="VectorBase:FBgn0005658"/>
<dbReference type="eggNOG" id="KOG3806">
    <property type="taxonomic scope" value="Eukaryota"/>
</dbReference>
<dbReference type="HOGENOM" id="CLU_022965_0_0_1"/>
<dbReference type="InParanoid" id="P29774"/>
<dbReference type="OMA" id="AYKGAWG"/>
<dbReference type="OrthoDB" id="10067219at2759"/>
<dbReference type="Reactome" id="R-DME-2559585">
    <property type="pathway name" value="Oncogene Induced Senescence"/>
</dbReference>
<dbReference type="BioGRID-ORCS" id="38700">
    <property type="hits" value="0 hits in 3 CRISPR screens"/>
</dbReference>
<dbReference type="GenomeRNAi" id="38700"/>
<dbReference type="PRO" id="PR:P29774"/>
<dbReference type="Proteomes" id="UP000000803">
    <property type="component" value="Chromosome 3L"/>
</dbReference>
<dbReference type="Bgee" id="FBgn0005658">
    <property type="expression patterns" value="Expressed in centrifugal neuron C3 (Drosophila) in insect head and 77 other cell types or tissues"/>
</dbReference>
<dbReference type="ExpressionAtlas" id="P29774">
    <property type="expression patterns" value="baseline and differential"/>
</dbReference>
<dbReference type="GO" id="GO:0005634">
    <property type="term" value="C:nucleus"/>
    <property type="evidence" value="ECO:0000318"/>
    <property type="project" value="GO_Central"/>
</dbReference>
<dbReference type="GO" id="GO:0000981">
    <property type="term" value="F:DNA-binding transcription factor activity, RNA polymerase II-specific"/>
    <property type="evidence" value="ECO:0000318"/>
    <property type="project" value="GO_Central"/>
</dbReference>
<dbReference type="GO" id="GO:0043565">
    <property type="term" value="F:sequence-specific DNA binding"/>
    <property type="evidence" value="ECO:0007669"/>
    <property type="project" value="InterPro"/>
</dbReference>
<dbReference type="GO" id="GO:0030154">
    <property type="term" value="P:cell differentiation"/>
    <property type="evidence" value="ECO:0000318"/>
    <property type="project" value="GO_Central"/>
</dbReference>
<dbReference type="GO" id="GO:0006355">
    <property type="term" value="P:regulation of DNA-templated transcription"/>
    <property type="evidence" value="ECO:0000303"/>
    <property type="project" value="UniProtKB"/>
</dbReference>
<dbReference type="GO" id="GO:0006357">
    <property type="term" value="P:regulation of transcription by RNA polymerase II"/>
    <property type="evidence" value="ECO:0000318"/>
    <property type="project" value="GO_Central"/>
</dbReference>
<dbReference type="FunFam" id="1.10.10.10:FF:000343">
    <property type="entry name" value="Ets at 65A, isoform C"/>
    <property type="match status" value="1"/>
</dbReference>
<dbReference type="Gene3D" id="1.10.10.10">
    <property type="entry name" value="Winged helix-like DNA-binding domain superfamily/Winged helix DNA-binding domain"/>
    <property type="match status" value="1"/>
</dbReference>
<dbReference type="InterPro" id="IPR000418">
    <property type="entry name" value="Ets_dom"/>
</dbReference>
<dbReference type="InterPro" id="IPR046328">
    <property type="entry name" value="ETS_fam"/>
</dbReference>
<dbReference type="InterPro" id="IPR036388">
    <property type="entry name" value="WH-like_DNA-bd_sf"/>
</dbReference>
<dbReference type="InterPro" id="IPR036390">
    <property type="entry name" value="WH_DNA-bd_sf"/>
</dbReference>
<dbReference type="PANTHER" id="PTHR11849:SF304">
    <property type="entry name" value="DNA-BINDING PROTEIN D-ETS-3"/>
    <property type="match status" value="1"/>
</dbReference>
<dbReference type="PANTHER" id="PTHR11849">
    <property type="entry name" value="ETS"/>
    <property type="match status" value="1"/>
</dbReference>
<dbReference type="Pfam" id="PF00178">
    <property type="entry name" value="Ets"/>
    <property type="match status" value="1"/>
</dbReference>
<dbReference type="PRINTS" id="PR00454">
    <property type="entry name" value="ETSDOMAIN"/>
</dbReference>
<dbReference type="SMART" id="SM00413">
    <property type="entry name" value="ETS"/>
    <property type="match status" value="1"/>
</dbReference>
<dbReference type="SUPFAM" id="SSF46785">
    <property type="entry name" value="Winged helix' DNA-binding domain"/>
    <property type="match status" value="1"/>
</dbReference>
<dbReference type="PROSITE" id="PS00345">
    <property type="entry name" value="ETS_DOMAIN_1"/>
    <property type="match status" value="1"/>
</dbReference>
<dbReference type="PROSITE" id="PS00346">
    <property type="entry name" value="ETS_DOMAIN_2"/>
    <property type="match status" value="1"/>
</dbReference>
<dbReference type="PROSITE" id="PS50061">
    <property type="entry name" value="ETS_DOMAIN_3"/>
    <property type="match status" value="1"/>
</dbReference>
<sequence length="490" mass="52055">MYENSCSYQTALDLKRVSPPTLAQVKTEECLALGQCSPEWTSYRFHQSTFEQLKQSVEKAKAALQDRSSFFGASSAFSDIYSSQRLTDSLDTLPVQSGNGGGNCLGLPHNPNVGVGVAGVLNYNAVSSSTAGVLSSSGNGVQRHRLDTLQPPSGCSPAVTQHGVITSSAGQVTSGTLDAVSAAPALPSLTASSSSHVEHKVRADKSTLDCATTSSHAAAPSSSSSASDHQQGRISGSKSSNTSGTGGGASASGGGGSALYSSYKSSWGSHSSTQSQGYSSNALGIKHDPHSQLRQPDPYQMFGPTSSRLASSGSGQIQLWQFLLELLSDSNNASCITWEGTNGEFKLTDPDEVARRWGERKSKPNMNYDKLSRALRYYYDKNIMTKVHGKRYAYKFDFQGLAAATQPAASDPTYKYQSDLFMTPYHHSAKLSSFMSPHHGMTSSSASIFPSAASWGNWGSPATNLYQPHSMSHVTPSHVAPHLSSYPHYA</sequence>
<comment type="subcellular location">
    <subcellularLocation>
        <location>Nucleus</location>
    </subcellularLocation>
</comment>
<comment type="alternative products">
    <event type="alternative splicing"/>
    <isoform>
        <id>P29774-1</id>
        <name>A</name>
        <sequence type="displayed"/>
    </isoform>
    <isoform>
        <id>P29774-2</id>
        <name>B</name>
        <sequence type="described" ref="VSP_001470 VSP_001471"/>
    </isoform>
</comment>
<comment type="tissue specificity">
    <text evidence="3">Embryonic ventral nervous system, higher in the thoracic than abdominal segments.</text>
</comment>
<comment type="developmental stage">
    <text evidence="3">Expressed throughout development.</text>
</comment>
<comment type="similarity">
    <text evidence="5">Belongs to the ETS family.</text>
</comment>
<reference key="1">
    <citation type="journal article" date="2000" name="Science">
        <title>The genome sequence of Drosophila melanogaster.</title>
        <authorList>
            <person name="Adams M.D."/>
            <person name="Celniker S.E."/>
            <person name="Holt R.A."/>
            <person name="Evans C.A."/>
            <person name="Gocayne J.D."/>
            <person name="Amanatides P.G."/>
            <person name="Scherer S.E."/>
            <person name="Li P.W."/>
            <person name="Hoskins R.A."/>
            <person name="Galle R.F."/>
            <person name="George R.A."/>
            <person name="Lewis S.E."/>
            <person name="Richards S."/>
            <person name="Ashburner M."/>
            <person name="Henderson S.N."/>
            <person name="Sutton G.G."/>
            <person name="Wortman J.R."/>
            <person name="Yandell M.D."/>
            <person name="Zhang Q."/>
            <person name="Chen L.X."/>
            <person name="Brandon R.C."/>
            <person name="Rogers Y.-H.C."/>
            <person name="Blazej R.G."/>
            <person name="Champe M."/>
            <person name="Pfeiffer B.D."/>
            <person name="Wan K.H."/>
            <person name="Doyle C."/>
            <person name="Baxter E.G."/>
            <person name="Helt G."/>
            <person name="Nelson C.R."/>
            <person name="Miklos G.L.G."/>
            <person name="Abril J.F."/>
            <person name="Agbayani A."/>
            <person name="An H.-J."/>
            <person name="Andrews-Pfannkoch C."/>
            <person name="Baldwin D."/>
            <person name="Ballew R.M."/>
            <person name="Basu A."/>
            <person name="Baxendale J."/>
            <person name="Bayraktaroglu L."/>
            <person name="Beasley E.M."/>
            <person name="Beeson K.Y."/>
            <person name="Benos P.V."/>
            <person name="Berman B.P."/>
            <person name="Bhandari D."/>
            <person name="Bolshakov S."/>
            <person name="Borkova D."/>
            <person name="Botchan M.R."/>
            <person name="Bouck J."/>
            <person name="Brokstein P."/>
            <person name="Brottier P."/>
            <person name="Burtis K.C."/>
            <person name="Busam D.A."/>
            <person name="Butler H."/>
            <person name="Cadieu E."/>
            <person name="Center A."/>
            <person name="Chandra I."/>
            <person name="Cherry J.M."/>
            <person name="Cawley S."/>
            <person name="Dahlke C."/>
            <person name="Davenport L.B."/>
            <person name="Davies P."/>
            <person name="de Pablos B."/>
            <person name="Delcher A."/>
            <person name="Deng Z."/>
            <person name="Mays A.D."/>
            <person name="Dew I."/>
            <person name="Dietz S.M."/>
            <person name="Dodson K."/>
            <person name="Doup L.E."/>
            <person name="Downes M."/>
            <person name="Dugan-Rocha S."/>
            <person name="Dunkov B.C."/>
            <person name="Dunn P."/>
            <person name="Durbin K.J."/>
            <person name="Evangelista C.C."/>
            <person name="Ferraz C."/>
            <person name="Ferriera S."/>
            <person name="Fleischmann W."/>
            <person name="Fosler C."/>
            <person name="Gabrielian A.E."/>
            <person name="Garg N.S."/>
            <person name="Gelbart W.M."/>
            <person name="Glasser K."/>
            <person name="Glodek A."/>
            <person name="Gong F."/>
            <person name="Gorrell J.H."/>
            <person name="Gu Z."/>
            <person name="Guan P."/>
            <person name="Harris M."/>
            <person name="Harris N.L."/>
            <person name="Harvey D.A."/>
            <person name="Heiman T.J."/>
            <person name="Hernandez J.R."/>
            <person name="Houck J."/>
            <person name="Hostin D."/>
            <person name="Houston K.A."/>
            <person name="Howland T.J."/>
            <person name="Wei M.-H."/>
            <person name="Ibegwam C."/>
            <person name="Jalali M."/>
            <person name="Kalush F."/>
            <person name="Karpen G.H."/>
            <person name="Ke Z."/>
            <person name="Kennison J.A."/>
            <person name="Ketchum K.A."/>
            <person name="Kimmel B.E."/>
            <person name="Kodira C.D."/>
            <person name="Kraft C.L."/>
            <person name="Kravitz S."/>
            <person name="Kulp D."/>
            <person name="Lai Z."/>
            <person name="Lasko P."/>
            <person name="Lei Y."/>
            <person name="Levitsky A.A."/>
            <person name="Li J.H."/>
            <person name="Li Z."/>
            <person name="Liang Y."/>
            <person name="Lin X."/>
            <person name="Liu X."/>
            <person name="Mattei B."/>
            <person name="McIntosh T.C."/>
            <person name="McLeod M.P."/>
            <person name="McPherson D."/>
            <person name="Merkulov G."/>
            <person name="Milshina N.V."/>
            <person name="Mobarry C."/>
            <person name="Morris J."/>
            <person name="Moshrefi A."/>
            <person name="Mount S.M."/>
            <person name="Moy M."/>
            <person name="Murphy B."/>
            <person name="Murphy L."/>
            <person name="Muzny D.M."/>
            <person name="Nelson D.L."/>
            <person name="Nelson D.R."/>
            <person name="Nelson K.A."/>
            <person name="Nixon K."/>
            <person name="Nusskern D.R."/>
            <person name="Pacleb J.M."/>
            <person name="Palazzolo M."/>
            <person name="Pittman G.S."/>
            <person name="Pan S."/>
            <person name="Pollard J."/>
            <person name="Puri V."/>
            <person name="Reese M.G."/>
            <person name="Reinert K."/>
            <person name="Remington K."/>
            <person name="Saunders R.D.C."/>
            <person name="Scheeler F."/>
            <person name="Shen H."/>
            <person name="Shue B.C."/>
            <person name="Siden-Kiamos I."/>
            <person name="Simpson M."/>
            <person name="Skupski M.P."/>
            <person name="Smith T.J."/>
            <person name="Spier E."/>
            <person name="Spradling A.C."/>
            <person name="Stapleton M."/>
            <person name="Strong R."/>
            <person name="Sun E."/>
            <person name="Svirskas R."/>
            <person name="Tector C."/>
            <person name="Turner R."/>
            <person name="Venter E."/>
            <person name="Wang A.H."/>
            <person name="Wang X."/>
            <person name="Wang Z.-Y."/>
            <person name="Wassarman D.A."/>
            <person name="Weinstock G.M."/>
            <person name="Weissenbach J."/>
            <person name="Williams S.M."/>
            <person name="Woodage T."/>
            <person name="Worley K.C."/>
            <person name="Wu D."/>
            <person name="Yang S."/>
            <person name="Yao Q.A."/>
            <person name="Ye J."/>
            <person name="Yeh R.-F."/>
            <person name="Zaveri J.S."/>
            <person name="Zhan M."/>
            <person name="Zhang G."/>
            <person name="Zhao Q."/>
            <person name="Zheng L."/>
            <person name="Zheng X.H."/>
            <person name="Zhong F.N."/>
            <person name="Zhong W."/>
            <person name="Zhou X."/>
            <person name="Zhu S.C."/>
            <person name="Zhu X."/>
            <person name="Smith H.O."/>
            <person name="Gibbs R.A."/>
            <person name="Myers E.W."/>
            <person name="Rubin G.M."/>
            <person name="Venter J.C."/>
        </authorList>
    </citation>
    <scope>NUCLEOTIDE SEQUENCE [LARGE SCALE GENOMIC DNA]</scope>
    <source>
        <strain>Berkeley</strain>
    </source>
</reference>
<reference key="2">
    <citation type="journal article" date="2002" name="Genome Biol.">
        <title>Annotation of the Drosophila melanogaster euchromatic genome: a systematic review.</title>
        <authorList>
            <person name="Misra S."/>
            <person name="Crosby M.A."/>
            <person name="Mungall C.J."/>
            <person name="Matthews B.B."/>
            <person name="Campbell K.S."/>
            <person name="Hradecky P."/>
            <person name="Huang Y."/>
            <person name="Kaminker J.S."/>
            <person name="Millburn G.H."/>
            <person name="Prochnik S.E."/>
            <person name="Smith C.D."/>
            <person name="Tupy J.L."/>
            <person name="Whitfield E.J."/>
            <person name="Bayraktaroglu L."/>
            <person name="Berman B.P."/>
            <person name="Bettencourt B.R."/>
            <person name="Celniker S.E."/>
            <person name="de Grey A.D.N.J."/>
            <person name="Drysdale R.A."/>
            <person name="Harris N.L."/>
            <person name="Richter J."/>
            <person name="Russo S."/>
            <person name="Schroeder A.J."/>
            <person name="Shu S.Q."/>
            <person name="Stapleton M."/>
            <person name="Yamada C."/>
            <person name="Ashburner M."/>
            <person name="Gelbart W.M."/>
            <person name="Rubin G.M."/>
            <person name="Lewis S.E."/>
        </authorList>
    </citation>
    <scope>GENOME REANNOTATION</scope>
    <scope>ALTERNATIVE SPLICING</scope>
    <source>
        <strain>Berkeley</strain>
    </source>
</reference>
<reference key="3">
    <citation type="journal article" date="2002" name="Genome Biol.">
        <title>A Drosophila full-length cDNA resource.</title>
        <authorList>
            <person name="Stapleton M."/>
            <person name="Carlson J.W."/>
            <person name="Brokstein P."/>
            <person name="Yu C."/>
            <person name="Champe M."/>
            <person name="George R.A."/>
            <person name="Guarin H."/>
            <person name="Kronmiller B."/>
            <person name="Pacleb J.M."/>
            <person name="Park S."/>
            <person name="Wan K.H."/>
            <person name="Rubin G.M."/>
            <person name="Celniker S.E."/>
        </authorList>
    </citation>
    <scope>NUCLEOTIDE SEQUENCE [LARGE SCALE MRNA] (ISOFORM B)</scope>
    <source>
        <strain>Berkeley</strain>
        <tissue>Head</tissue>
    </source>
</reference>
<reference key="4">
    <citation type="submission" date="2004-01" db="EMBL/GenBank/DDBJ databases">
        <authorList>
            <person name="Stapleton M."/>
            <person name="Brokstein P."/>
            <person name="Hong L."/>
            <person name="Agbayani A."/>
            <person name="Carlson J.W."/>
            <person name="Champe M."/>
            <person name="Chavez C."/>
            <person name="Dorsett V."/>
            <person name="Dresnek D."/>
            <person name="Farfan D."/>
            <person name="Frise E."/>
            <person name="George R.A."/>
            <person name="Gonzalez M."/>
            <person name="Guarin H."/>
            <person name="Kronmiller B."/>
            <person name="Li P.W."/>
            <person name="Liao G."/>
            <person name="Miranda A."/>
            <person name="Mungall C.J."/>
            <person name="Nunoo J."/>
            <person name="Pacleb J.M."/>
            <person name="Paragas V."/>
            <person name="Park S."/>
            <person name="Patel S."/>
            <person name="Phouanenavong S."/>
            <person name="Wan K.H."/>
            <person name="Yu C."/>
            <person name="Lewis S.E."/>
            <person name="Rubin G.M."/>
            <person name="Celniker S.E."/>
        </authorList>
    </citation>
    <scope>SEQUENCE REVISION</scope>
</reference>
<reference key="5">
    <citation type="submission" date="2003-02" db="EMBL/GenBank/DDBJ databases">
        <authorList>
            <person name="Stapleton M."/>
            <person name="Brokstein P."/>
            <person name="Hong L."/>
            <person name="Agbayani A."/>
            <person name="Carlson J.W."/>
            <person name="Champe M."/>
            <person name="Chavez C."/>
            <person name="Dorsett V."/>
            <person name="Dresnek D."/>
            <person name="Farfan D."/>
            <person name="Frise E."/>
            <person name="George R.A."/>
            <person name="Gonzalez M."/>
            <person name="Guarin H."/>
            <person name="Kronmiller B."/>
            <person name="Li P.W."/>
            <person name="Liao G."/>
            <person name="Miranda A."/>
            <person name="Mungall C.J."/>
            <person name="Nunoo J."/>
            <person name="Pacleb J.M."/>
            <person name="Paragas V."/>
            <person name="Park S."/>
            <person name="Patel S."/>
            <person name="Phouanenavong S."/>
            <person name="Wan K.H."/>
            <person name="Yu C."/>
            <person name="Lewis S.E."/>
            <person name="Rubin G.M."/>
            <person name="Celniker S.E."/>
        </authorList>
    </citation>
    <scope>NUCLEOTIDE SEQUENCE [LARGE SCALE MRNA] (ISOFORM A)</scope>
    <source>
        <strain>Berkeley</strain>
        <tissue>Head</tissue>
    </source>
</reference>
<reference key="6">
    <citation type="journal article" date="1992" name="Dev. Biol.">
        <title>Isolation and characterization of five Drosophila genes that encode an ets-related DNA binding domain.</title>
        <authorList>
            <person name="Chen T."/>
            <person name="Bunting M."/>
            <person name="Karim F.D."/>
            <person name="Thummel C.S."/>
        </authorList>
    </citation>
    <scope>NUCLEOTIDE SEQUENCE [GENOMIC DNA] OF 314-375</scope>
    <scope>FUNCTION</scope>
    <scope>TISSUE SPECIFICITY</scope>
    <scope>DEVELOPMENTAL STAGE</scope>
    <source>
        <strain>Canton-S</strain>
        <tissue>Larva</tissue>
    </source>
</reference>
<evidence type="ECO:0000255" key="1">
    <source>
        <dbReference type="PROSITE-ProRule" id="PRU00237"/>
    </source>
</evidence>
<evidence type="ECO:0000256" key="2">
    <source>
        <dbReference type="SAM" id="MobiDB-lite"/>
    </source>
</evidence>
<evidence type="ECO:0000269" key="3">
    <source>
    </source>
</evidence>
<evidence type="ECO:0000303" key="4">
    <source>
    </source>
</evidence>
<evidence type="ECO:0000305" key="5"/>